<accession>P17473</accession>
<feature type="chain" id="PRO_0000115817" description="Major viral transcription factor">
    <location>
        <begin position="1"/>
        <end position="1487"/>
    </location>
</feature>
<feature type="region of interest" description="Disordered" evidence="1">
    <location>
        <begin position="41"/>
        <end position="295"/>
    </location>
</feature>
<feature type="region of interest" description="Disordered" evidence="1">
    <location>
        <begin position="310"/>
        <end position="371"/>
    </location>
</feature>
<feature type="region of interest" description="Disordered" evidence="1">
    <location>
        <begin position="409"/>
        <end position="442"/>
    </location>
</feature>
<feature type="region of interest" description="Disordered" evidence="1">
    <location>
        <begin position="803"/>
        <end position="1007"/>
    </location>
</feature>
<feature type="compositionally biased region" description="Pro residues" evidence="1">
    <location>
        <begin position="66"/>
        <end position="75"/>
    </location>
</feature>
<feature type="compositionally biased region" description="Low complexity" evidence="1">
    <location>
        <begin position="165"/>
        <end position="193"/>
    </location>
</feature>
<feature type="compositionally biased region" description="Low complexity" evidence="1">
    <location>
        <begin position="201"/>
        <end position="213"/>
    </location>
</feature>
<feature type="compositionally biased region" description="Acidic residues" evidence="1">
    <location>
        <begin position="214"/>
        <end position="224"/>
    </location>
</feature>
<feature type="compositionally biased region" description="Low complexity" evidence="1">
    <location>
        <begin position="235"/>
        <end position="272"/>
    </location>
</feature>
<feature type="compositionally biased region" description="Pro residues" evidence="1">
    <location>
        <begin position="273"/>
        <end position="285"/>
    </location>
</feature>
<feature type="compositionally biased region" description="Low complexity" evidence="1">
    <location>
        <begin position="807"/>
        <end position="829"/>
    </location>
</feature>
<feature type="compositionally biased region" description="Low complexity" evidence="1">
    <location>
        <begin position="849"/>
        <end position="860"/>
    </location>
</feature>
<feature type="compositionally biased region" description="Low complexity" evidence="1">
    <location>
        <begin position="867"/>
        <end position="877"/>
    </location>
</feature>
<feature type="compositionally biased region" description="Polar residues" evidence="1">
    <location>
        <begin position="878"/>
        <end position="893"/>
    </location>
</feature>
<feature type="compositionally biased region" description="Basic residues" evidence="1">
    <location>
        <begin position="920"/>
        <end position="929"/>
    </location>
</feature>
<feature type="compositionally biased region" description="Low complexity" evidence="1">
    <location>
        <begin position="938"/>
        <end position="951"/>
    </location>
</feature>
<feature type="compositionally biased region" description="Basic and acidic residues" evidence="1">
    <location>
        <begin position="988"/>
        <end position="1007"/>
    </location>
</feature>
<gene>
    <name type="primary">IE</name>
</gene>
<comment type="function">
    <text>This IE protein is a multifunctional protein capable of migrating to the nucleus, binding to DNA, trans-activating other viral genes, and autoregulating its own synthesis.</text>
</comment>
<comment type="interaction">
    <interactant intactId="EBI-11702772">
        <id>P17473</id>
    </interactant>
    <interactant intactId="EBI-11711710">
        <id>P68337</id>
        <label>IR4</label>
    </interactant>
    <organismsDiffer>false</organismsDiffer>
    <experiments>11</experiments>
</comment>
<comment type="interaction">
    <interactant intactId="EBI-11702772">
        <id>P17473</id>
    </interactant>
    <interactant intactId="EBI-389564">
        <id>Q00403</id>
        <label>GTF2B</label>
    </interactant>
    <organismsDiffer>true</organismsDiffer>
    <experiments>4</experiments>
</comment>
<comment type="interaction">
    <interactant intactId="EBI-11702772">
        <id>P17473</id>
    </interactant>
    <interactant intactId="EBI-11712595">
        <id>P87662</id>
        <label>ICP0</label>
    </interactant>
    <organismsDiffer>true</organismsDiffer>
    <experiments>3</experiments>
</comment>
<comment type="interaction">
    <interactant intactId="EBI-11702772">
        <id>P17473</id>
    </interactant>
    <interactant intactId="EBI-354533">
        <id>P35268</id>
        <label>RPL22</label>
    </interactant>
    <organismsDiffer>true</organismsDiffer>
    <experiments>2</experiments>
</comment>
<comment type="interaction">
    <interactant intactId="EBI-11702772">
        <id>P17473</id>
    </interactant>
    <interactant intactId="EBI-12516310">
        <id>P20226-1</id>
        <label>TBP</label>
    </interactant>
    <organismsDiffer>true</organismsDiffer>
    <experiments>2</experiments>
</comment>
<comment type="subcellular location">
    <subcellularLocation>
        <location>Host nucleus</location>
    </subcellularLocation>
</comment>
<comment type="PTM">
    <text>A long stretch of serine residues may be a major site of phosphorylation.</text>
</comment>
<comment type="similarity">
    <text evidence="2">Belongs to the herpesviridae ICP4 family.</text>
</comment>
<sequence length="1487" mass="154717">MASQRSDFAPDLYDFIESNDFGEDPLIRAASAAEEGFTQPAAPDLLYGSQNMFGVDDAPLSTPVVVIPPPSPAPEPRGGKAKRSPSAAGSGGPPTPAAAAQPASPAPSPAPGLAAMLKMVHSSVAPGNGRRATGSSSPGGGDAADPVALDSDTETCPGSPQPEFPSSASPGGGSPAPRVRSISISSSSSSSSSMDEDDQADGAGASSSSSSSSDDSDSDEGGEEETPRPRHSQNAAKTPSAAGSPGPSSGGDRPAAGAATPKSCRSGAASPGAPAPAPASAPAPSRPGGGLLPPGARILEYLEGVREANLAKTLERPEPPAGMASPPGRSPHRLPKDQRPKSALAGASKRKRANPRPRPQTQTQAPAEEAPQTAVWDLLDMNSSQATGAAAAAASAPAAASCAPGVYQREPLLTPSGDPWPGSDPPPMGRVRYGGTGDSRDGLWDDPEIVLAASRYAEAQAPVPVFVPEMGDSTKQYNALVRMVFESREAMSWLQNSKLSGQDQNLAQFCQKFIHAPRGHGSFITGSVANPLPHIGDAMAAGNALWALPHAAASVAMSRRYDRTQKSFILQSLRRAYADMAYPRDEAGRPDSLAAVAGCPAQAAAAAASQQQPEAPAPSVRVREAYTRVCAALGPRRKAAAAAAAPGTRAPRPSAFRLRELGDACVLACQAVFEALLRLRGGASAVPGLDPSEIPSPACPPEALCSNPAGLETAALSLYELRDLVERARLLGDSDPTHRLGSDELRLAVRAVLVVARTVAPLVRYNAEGARARASAWTVTQAVFSIPSLVGGMLGEAVSLLAPPTRSQQPSSSSPGGEPFSGSAAAEGSLQTLPPLWPTVPGKQSATVPSSHSQSPQHSQSGGGAGATTATCCRATQTNARSRGQQHQPQKARSPQAAASPAHLSQEAMPGSSSDDRAIHGRPRGKSGKRRSEPLEPAAQAGASASFSSSARGYDPSGPVDSPPAPKRRVATPGHQAPRALGPMPAEGPDRRGGFRRVPRGDCHTPRPSDAACAAYCPPELVAELIDNQLFPEAWRPALTFDPQALATIAARCSGPPARDGARLGELAASGPLRRRAAWMHQIPDPEDVKVVVLYSPLQDEDLLGGLPASRPGGSRREPLWSDLKGGLSALLAALGNRILTKRSHAWAGNWTGAPDVSALNAQGVLLLSTGDLAFTGCVEYLCLRLGSARRKLLVLDAVSTEDWPQDGPAISQYHIYMRAALTPRVACAVRWPGERHLSRAVLTSSTLFGPGLFARAEAAFARLYPDSAPLRLCRSSNVAYTVDTRAGERTRVPLAPREYRQRVLPDYDGCKDMRAQAEGLGFHDPDFEEGAAQSHRAANRWGLGAWLRPVYLACGRRGAGAVEPSELLIPELLSEFCRVALLEPDAEAEPLVLPITEAPRRRAPRVDWEPGFGSRSTSVLHMGATELCLPEPDDELEIDGAGDVELVVEHPGPSPGVAQALRRAPIKIEVVSDDEDGGDWCNPYLS</sequence>
<protein>
    <recommendedName>
        <fullName>Major viral transcription factor</fullName>
    </recommendedName>
    <alternativeName>
        <fullName>155 kDa immediate-early protein</fullName>
    </alternativeName>
</protein>
<name>ICP4_EHV1K</name>
<keyword id="KW-0238">DNA-binding</keyword>
<keyword id="KW-0244">Early protein</keyword>
<keyword id="KW-1048">Host nucleus</keyword>
<keyword id="KW-0597">Phosphoprotein</keyword>
<keyword id="KW-0804">Transcription</keyword>
<keyword id="KW-0805">Transcription regulation</keyword>
<reference key="1">
    <citation type="journal article" date="1989" name="Virology">
        <title>DNA sequence and comparative analyses of the equine herpesvirus type 1 immediate early gene.</title>
        <authorList>
            <person name="Grundy F.J."/>
            <person name="Baumann R.P."/>
            <person name="O'Callaghan D.J."/>
        </authorList>
    </citation>
    <scope>NUCLEOTIDE SEQUENCE [GENOMIC DNA]</scope>
</reference>
<reference key="2">
    <citation type="journal article" date="1989" name="J. Virol.">
        <title>Mapping the termini and intron of the spliced immediate-early transcript of equine herpesvirus 1.</title>
        <authorList>
            <person name="Harty R.N."/>
            <person name="Colle C.F. III"/>
            <person name="Grundy F.J."/>
            <person name="O'Callaghan D.J."/>
        </authorList>
    </citation>
    <scope>NUCLEOTIDE SEQUENCE [GENOMIC DNA] OF 1432-1487</scope>
</reference>
<dbReference type="EMBL" id="J04366">
    <property type="protein sequence ID" value="AAA46089.1"/>
    <property type="molecule type" value="Genomic_DNA"/>
</dbReference>
<dbReference type="EMBL" id="AH003099">
    <property type="protein sequence ID" value="AAA66554.1"/>
    <property type="molecule type" value="Genomic_DNA"/>
</dbReference>
<dbReference type="PIR" id="A33764">
    <property type="entry name" value="EDBEE1"/>
</dbReference>
<dbReference type="SMR" id="P17473"/>
<dbReference type="IntAct" id="P17473">
    <property type="interactions" value="6"/>
</dbReference>
<dbReference type="GO" id="GO:0044095">
    <property type="term" value="C:host cell nucleoplasm"/>
    <property type="evidence" value="ECO:0000314"/>
    <property type="project" value="AgBase"/>
</dbReference>
<dbReference type="GO" id="GO:0042025">
    <property type="term" value="C:host cell nucleus"/>
    <property type="evidence" value="ECO:0000314"/>
    <property type="project" value="AgBase"/>
</dbReference>
<dbReference type="GO" id="GO:0003677">
    <property type="term" value="F:DNA binding"/>
    <property type="evidence" value="ECO:0000314"/>
    <property type="project" value="AgBase"/>
</dbReference>
<dbReference type="GO" id="GO:0039695">
    <property type="term" value="P:DNA-templated viral transcription"/>
    <property type="evidence" value="ECO:0000250"/>
    <property type="project" value="UniProtKB"/>
</dbReference>
<dbReference type="GO" id="GO:0045893">
    <property type="term" value="P:positive regulation of DNA-templated transcription"/>
    <property type="evidence" value="ECO:0007669"/>
    <property type="project" value="InterPro"/>
</dbReference>
<dbReference type="GO" id="GO:0010628">
    <property type="term" value="P:positive regulation of gene expression"/>
    <property type="evidence" value="ECO:0000315"/>
    <property type="project" value="AgBase"/>
</dbReference>
<dbReference type="GO" id="GO:0050434">
    <property type="term" value="P:positive regulation of viral transcription"/>
    <property type="evidence" value="ECO:0000315"/>
    <property type="project" value="AgBase"/>
</dbReference>
<dbReference type="InterPro" id="IPR005205">
    <property type="entry name" value="Herpes_ICP4_C"/>
</dbReference>
<dbReference type="InterPro" id="IPR005206">
    <property type="entry name" value="Herpes_ICP4_N"/>
</dbReference>
<dbReference type="Pfam" id="PF03585">
    <property type="entry name" value="Herpes_ICP4_C"/>
    <property type="match status" value="1"/>
</dbReference>
<dbReference type="Pfam" id="PF03584">
    <property type="entry name" value="Herpes_ICP4_N"/>
    <property type="match status" value="1"/>
</dbReference>
<organism>
    <name type="scientific">Equine herpesvirus 1 (strain Kentucky A)</name>
    <name type="common">EHV-1</name>
    <name type="synonym">Equine abortion virus</name>
    <dbReference type="NCBI Taxonomy" id="10329"/>
    <lineage>
        <taxon>Viruses</taxon>
        <taxon>Duplodnaviria</taxon>
        <taxon>Heunggongvirae</taxon>
        <taxon>Peploviricota</taxon>
        <taxon>Herviviricetes</taxon>
        <taxon>Herpesvirales</taxon>
        <taxon>Orthoherpesviridae</taxon>
        <taxon>Alphaherpesvirinae</taxon>
        <taxon>Varicellovirus</taxon>
        <taxon>Varicellovirus equidalpha1</taxon>
        <taxon>Equid alphaherpesvirus 1</taxon>
    </lineage>
</organism>
<organismHost>
    <name type="scientific">Equus caballus</name>
    <name type="common">Horse</name>
    <dbReference type="NCBI Taxonomy" id="9796"/>
</organismHost>
<proteinExistence type="evidence at protein level"/>
<evidence type="ECO:0000256" key="1">
    <source>
        <dbReference type="SAM" id="MobiDB-lite"/>
    </source>
</evidence>
<evidence type="ECO:0000305" key="2"/>